<keyword id="KW-0067">ATP-binding</keyword>
<keyword id="KW-0963">Cytoplasm</keyword>
<keyword id="KW-0418">Kinase</keyword>
<keyword id="KW-0444">Lipid biosynthesis</keyword>
<keyword id="KW-0443">Lipid metabolism</keyword>
<keyword id="KW-0460">Magnesium</keyword>
<keyword id="KW-0479">Metal-binding</keyword>
<keyword id="KW-0547">Nucleotide-binding</keyword>
<keyword id="KW-0594">Phospholipid biosynthesis</keyword>
<keyword id="KW-1208">Phospholipid metabolism</keyword>
<keyword id="KW-0808">Transferase</keyword>
<gene>
    <name type="ordered locus">YpsIP31758_1207</name>
</gene>
<accession>A7FG10</accession>
<organism>
    <name type="scientific">Yersinia pseudotuberculosis serotype O:1b (strain IP 31758)</name>
    <dbReference type="NCBI Taxonomy" id="349747"/>
    <lineage>
        <taxon>Bacteria</taxon>
        <taxon>Pseudomonadati</taxon>
        <taxon>Pseudomonadota</taxon>
        <taxon>Gammaproteobacteria</taxon>
        <taxon>Enterobacterales</taxon>
        <taxon>Yersiniaceae</taxon>
        <taxon>Yersinia</taxon>
    </lineage>
</organism>
<feature type="chain" id="PRO_1000068256" description="Probable lipid kinase YegS-like">
    <location>
        <begin position="1"/>
        <end position="296"/>
    </location>
</feature>
<feature type="domain" description="DAGKc" evidence="1">
    <location>
        <begin position="1"/>
        <end position="130"/>
    </location>
</feature>
<feature type="active site" description="Proton acceptor" evidence="1">
    <location>
        <position position="268"/>
    </location>
</feature>
<feature type="binding site" evidence="1">
    <location>
        <position position="37"/>
    </location>
    <ligand>
        <name>ATP</name>
        <dbReference type="ChEBI" id="CHEBI:30616"/>
    </ligand>
</feature>
<feature type="binding site" evidence="1">
    <location>
        <begin position="63"/>
        <end position="69"/>
    </location>
    <ligand>
        <name>ATP</name>
        <dbReference type="ChEBI" id="CHEBI:30616"/>
    </ligand>
</feature>
<feature type="binding site" evidence="1">
    <location>
        <position position="92"/>
    </location>
    <ligand>
        <name>ATP</name>
        <dbReference type="ChEBI" id="CHEBI:30616"/>
    </ligand>
</feature>
<feature type="binding site" evidence="1">
    <location>
        <position position="212"/>
    </location>
    <ligand>
        <name>Mg(2+)</name>
        <dbReference type="ChEBI" id="CHEBI:18420"/>
    </ligand>
</feature>
<feature type="binding site" evidence="1">
    <location>
        <position position="215"/>
    </location>
    <ligand>
        <name>Mg(2+)</name>
        <dbReference type="ChEBI" id="CHEBI:18420"/>
    </ligand>
</feature>
<feature type="binding site" evidence="1">
    <location>
        <position position="217"/>
    </location>
    <ligand>
        <name>Mg(2+)</name>
        <dbReference type="ChEBI" id="CHEBI:18420"/>
    </ligand>
</feature>
<name>YEGS_YERP3</name>
<reference key="1">
    <citation type="journal article" date="2007" name="PLoS Genet.">
        <title>The complete genome sequence of Yersinia pseudotuberculosis IP31758, the causative agent of Far East scarlet-like fever.</title>
        <authorList>
            <person name="Eppinger M."/>
            <person name="Rosovitz M.J."/>
            <person name="Fricke W.F."/>
            <person name="Rasko D.A."/>
            <person name="Kokorina G."/>
            <person name="Fayolle C."/>
            <person name="Lindler L.E."/>
            <person name="Carniel E."/>
            <person name="Ravel J."/>
        </authorList>
    </citation>
    <scope>NUCLEOTIDE SEQUENCE [LARGE SCALE GENOMIC DNA]</scope>
    <source>
        <strain>IP 31758</strain>
    </source>
</reference>
<comment type="function">
    <text evidence="1">Probably phosphorylates lipids; the in vivo substrate is unknown.</text>
</comment>
<comment type="cofactor">
    <cofactor evidence="1">
        <name>Mg(2+)</name>
        <dbReference type="ChEBI" id="CHEBI:18420"/>
    </cofactor>
    <cofactor evidence="1">
        <name>Ca(2+)</name>
        <dbReference type="ChEBI" id="CHEBI:29108"/>
    </cofactor>
    <text evidence="1">Binds 1 Mg(2+) ion per subunit. Ca(2+) may be able to substitute.</text>
</comment>
<comment type="subcellular location">
    <subcellularLocation>
        <location evidence="1">Cytoplasm</location>
    </subcellularLocation>
</comment>
<comment type="similarity">
    <text evidence="1">Belongs to the diacylglycerol/lipid kinase family. YegS lipid kinase subfamily.</text>
</comment>
<proteinExistence type="inferred from homology"/>
<dbReference type="EC" id="2.7.1.-" evidence="1"/>
<dbReference type="EMBL" id="CP000720">
    <property type="protein sequence ID" value="ABS49604.1"/>
    <property type="molecule type" value="Genomic_DNA"/>
</dbReference>
<dbReference type="SMR" id="A7FG10"/>
<dbReference type="KEGG" id="ypi:YpsIP31758_1207"/>
<dbReference type="HOGENOM" id="CLU_045532_1_1_6"/>
<dbReference type="Proteomes" id="UP000002412">
    <property type="component" value="Chromosome"/>
</dbReference>
<dbReference type="GO" id="GO:0005737">
    <property type="term" value="C:cytoplasm"/>
    <property type="evidence" value="ECO:0007669"/>
    <property type="project" value="UniProtKB-SubCell"/>
</dbReference>
<dbReference type="GO" id="GO:0005886">
    <property type="term" value="C:plasma membrane"/>
    <property type="evidence" value="ECO:0007669"/>
    <property type="project" value="TreeGrafter"/>
</dbReference>
<dbReference type="GO" id="GO:0005524">
    <property type="term" value="F:ATP binding"/>
    <property type="evidence" value="ECO:0007669"/>
    <property type="project" value="UniProtKB-UniRule"/>
</dbReference>
<dbReference type="GO" id="GO:0001727">
    <property type="term" value="F:lipid kinase activity"/>
    <property type="evidence" value="ECO:0007669"/>
    <property type="project" value="UniProtKB-UniRule"/>
</dbReference>
<dbReference type="GO" id="GO:0000287">
    <property type="term" value="F:magnesium ion binding"/>
    <property type="evidence" value="ECO:0007669"/>
    <property type="project" value="UniProtKB-UniRule"/>
</dbReference>
<dbReference type="GO" id="GO:0008654">
    <property type="term" value="P:phospholipid biosynthetic process"/>
    <property type="evidence" value="ECO:0007669"/>
    <property type="project" value="UniProtKB-UniRule"/>
</dbReference>
<dbReference type="Gene3D" id="2.60.200.40">
    <property type="match status" value="1"/>
</dbReference>
<dbReference type="Gene3D" id="3.40.50.10330">
    <property type="entry name" value="Probable inorganic polyphosphate/atp-NAD kinase, domain 1"/>
    <property type="match status" value="1"/>
</dbReference>
<dbReference type="HAMAP" id="MF_01377">
    <property type="entry name" value="YegS"/>
    <property type="match status" value="1"/>
</dbReference>
<dbReference type="InterPro" id="IPR017438">
    <property type="entry name" value="ATP-NAD_kinase_N"/>
</dbReference>
<dbReference type="InterPro" id="IPR005218">
    <property type="entry name" value="Diacylglycerol/lipid_kinase"/>
</dbReference>
<dbReference type="InterPro" id="IPR001206">
    <property type="entry name" value="Diacylglycerol_kinase_cat_dom"/>
</dbReference>
<dbReference type="InterPro" id="IPR022433">
    <property type="entry name" value="Lip_kinase_YegS"/>
</dbReference>
<dbReference type="InterPro" id="IPR050187">
    <property type="entry name" value="Lipid_Phosphate_FormReg"/>
</dbReference>
<dbReference type="InterPro" id="IPR016064">
    <property type="entry name" value="NAD/diacylglycerol_kinase_sf"/>
</dbReference>
<dbReference type="InterPro" id="IPR045540">
    <property type="entry name" value="YegS/DAGK_C"/>
</dbReference>
<dbReference type="NCBIfam" id="TIGR03702">
    <property type="entry name" value="lip_kinase_YegS"/>
    <property type="match status" value="1"/>
</dbReference>
<dbReference type="NCBIfam" id="NF009602">
    <property type="entry name" value="PRK13054.1"/>
    <property type="match status" value="1"/>
</dbReference>
<dbReference type="NCBIfam" id="TIGR00147">
    <property type="entry name" value="YegS/Rv2252/BmrU family lipid kinase"/>
    <property type="match status" value="1"/>
</dbReference>
<dbReference type="PANTHER" id="PTHR12358:SF106">
    <property type="entry name" value="LIPID KINASE YEGS"/>
    <property type="match status" value="1"/>
</dbReference>
<dbReference type="PANTHER" id="PTHR12358">
    <property type="entry name" value="SPHINGOSINE KINASE"/>
    <property type="match status" value="1"/>
</dbReference>
<dbReference type="Pfam" id="PF00781">
    <property type="entry name" value="DAGK_cat"/>
    <property type="match status" value="1"/>
</dbReference>
<dbReference type="Pfam" id="PF19279">
    <property type="entry name" value="YegS_C"/>
    <property type="match status" value="1"/>
</dbReference>
<dbReference type="SMART" id="SM00046">
    <property type="entry name" value="DAGKc"/>
    <property type="match status" value="1"/>
</dbReference>
<dbReference type="SUPFAM" id="SSF111331">
    <property type="entry name" value="NAD kinase/diacylglycerol kinase-like"/>
    <property type="match status" value="1"/>
</dbReference>
<dbReference type="PROSITE" id="PS50146">
    <property type="entry name" value="DAGK"/>
    <property type="match status" value="1"/>
</dbReference>
<protein>
    <recommendedName>
        <fullName evidence="1">Probable lipid kinase YegS-like</fullName>
        <ecNumber evidence="1">2.7.1.-</ecNumber>
    </recommendedName>
</protein>
<evidence type="ECO:0000255" key="1">
    <source>
        <dbReference type="HAMAP-Rule" id="MF_01377"/>
    </source>
</evidence>
<sequence>MPHTLLILNGKESGNPEVREAVKNVRDEGLTLHVRITWEHGDAKRYVEEAATLAVSTVIAGGGDGTINEVATALMSLPADKRPCLGILPLGTANDFATGCNIPLQIENALQLAVKGRAVAIDLAQVNGEHYFINMATGGFGTRITTETPDKLKAALGGVSYFIHGLMRLDALKADSCKIHGPDFHWSGDALVIGIGNGKQAGGGQLLCPDALINDGLMQLRLLTAKELLPAVLSTLFNGEKNKNVIDATVPWLDITAPNDITFNLDGEPLSGRHFHIEILPHAIQCRLPPNCPLLG</sequence>